<keyword id="KW-0903">Direct protein sequencing</keyword>
<keyword id="KW-1015">Disulfide bond</keyword>
<keyword id="KW-0326">Glycosidase</keyword>
<keyword id="KW-0378">Hydrolase</keyword>
<dbReference type="EC" id="3.2.1.22"/>
<dbReference type="GO" id="GO:0004557">
    <property type="term" value="F:alpha-galactosidase activity"/>
    <property type="evidence" value="ECO:0007669"/>
    <property type="project" value="UniProtKB-EC"/>
</dbReference>
<protein>
    <recommendedName>
        <fullName evidence="1">Alpha-galactosidase</fullName>
        <ecNumber>3.2.1.22</ecNumber>
    </recommendedName>
    <alternativeName>
        <fullName evidence="1">Alpha-D-galactoside galactohydrolase</fullName>
    </alternativeName>
    <alternativeName>
        <fullName evidence="1">Melibiase</fullName>
    </alternativeName>
</protein>
<accession>P86073</accession>
<organism>
    <name type="scientific">Capsicum annuum var. annuum</name>
    <name type="common">Red pepper</name>
    <dbReference type="NCBI Taxonomy" id="40321"/>
    <lineage>
        <taxon>Eukaryota</taxon>
        <taxon>Viridiplantae</taxon>
        <taxon>Streptophyta</taxon>
        <taxon>Embryophyta</taxon>
        <taxon>Tracheophyta</taxon>
        <taxon>Spermatophyta</taxon>
        <taxon>Magnoliopsida</taxon>
        <taxon>eudicotyledons</taxon>
        <taxon>Gunneridae</taxon>
        <taxon>Pentapetalae</taxon>
        <taxon>asterids</taxon>
        <taxon>lamiids</taxon>
        <taxon>Solanales</taxon>
        <taxon>Solanaceae</taxon>
        <taxon>Solanoideae</taxon>
        <taxon>Capsiceae</taxon>
        <taxon>Capsicum</taxon>
    </lineage>
</organism>
<proteinExistence type="evidence at protein level"/>
<name>AGAL_CAPAA</name>
<reference evidence="3" key="1">
    <citation type="submission" date="2008-07" db="UniProtKB">
        <authorList>
            <person name="Almagro L."/>
            <person name="Sabater Jara A.B."/>
            <person name="Pedreno M.A."/>
        </authorList>
    </citation>
    <scope>PROTEIN SEQUENCE</scope>
</reference>
<sequence length="14" mass="1444">LGIYSDAGTQTCSK</sequence>
<comment type="catalytic activity">
    <reaction>
        <text>Hydrolysis of terminal, non-reducing alpha-D-galactose residues in alpha-D-galactosides, including galactose oligosaccharides, galactomannans and galactolipids.</text>
        <dbReference type="EC" id="3.2.1.22"/>
    </reaction>
</comment>
<comment type="similarity">
    <text evidence="2">Belongs to the glycosyl hydrolase 27 family.</text>
</comment>
<feature type="chain" id="PRO_0000362992" description="Alpha-galactosidase">
    <location>
        <begin position="1" status="less than"/>
        <end position="14" status="greater than"/>
    </location>
</feature>
<feature type="disulfide bond" evidence="1">
    <location>
        <begin position="12"/>
        <end status="unknown"/>
    </location>
</feature>
<feature type="unsure residue" description="L or I">
    <location>
        <position position="1"/>
    </location>
</feature>
<feature type="unsure residue" description="I or L">
    <location>
        <position position="3"/>
    </location>
</feature>
<feature type="unsure residue" description="Q or K">
    <location>
        <position position="10"/>
    </location>
</feature>
<feature type="unsure residue" description="K or Q">
    <location>
        <position position="14"/>
    </location>
</feature>
<feature type="non-terminal residue">
    <location>
        <position position="1"/>
    </location>
</feature>
<feature type="non-terminal residue">
    <location>
        <position position="14"/>
    </location>
</feature>
<evidence type="ECO:0000250" key="1">
    <source>
        <dbReference type="UniProtKB" id="Q9FXT4"/>
    </source>
</evidence>
<evidence type="ECO:0000255" key="2"/>
<evidence type="ECO:0000305" key="3"/>